<evidence type="ECO:0000250" key="1">
    <source>
        <dbReference type="UniProtKB" id="P53597"/>
    </source>
</evidence>
<evidence type="ECO:0000250" key="2">
    <source>
        <dbReference type="UniProtKB" id="Q9WUM5"/>
    </source>
</evidence>
<evidence type="ECO:0000255" key="3">
    <source>
        <dbReference type="HAMAP-Rule" id="MF_03222"/>
    </source>
</evidence>
<evidence type="ECO:0000269" key="4">
    <source>
    </source>
</evidence>
<evidence type="ECO:0000305" key="5"/>
<gene>
    <name evidence="3" type="primary">Suclg1</name>
</gene>
<name>SUCA_RAT</name>
<organism>
    <name type="scientific">Rattus norvegicus</name>
    <name type="common">Rat</name>
    <dbReference type="NCBI Taxonomy" id="10116"/>
    <lineage>
        <taxon>Eukaryota</taxon>
        <taxon>Metazoa</taxon>
        <taxon>Chordata</taxon>
        <taxon>Craniata</taxon>
        <taxon>Vertebrata</taxon>
        <taxon>Euteleostomi</taxon>
        <taxon>Mammalia</taxon>
        <taxon>Eutheria</taxon>
        <taxon>Euarchontoglires</taxon>
        <taxon>Glires</taxon>
        <taxon>Rodentia</taxon>
        <taxon>Myomorpha</taxon>
        <taxon>Muroidea</taxon>
        <taxon>Muridae</taxon>
        <taxon>Murinae</taxon>
        <taxon>Rattus</taxon>
    </lineage>
</organism>
<dbReference type="EC" id="6.2.1.4" evidence="3"/>
<dbReference type="EC" id="6.2.1.5" evidence="3"/>
<dbReference type="EMBL" id="BC061537">
    <property type="protein sequence ID" value="AAH61537.2"/>
    <property type="molecule type" value="mRNA"/>
</dbReference>
<dbReference type="EMBL" id="J03621">
    <property type="protein sequence ID" value="AAA41233.1"/>
    <property type="status" value="ALT_SEQ"/>
    <property type="molecule type" value="mRNA"/>
</dbReference>
<dbReference type="PIR" id="A28962">
    <property type="entry name" value="SYRTSA"/>
</dbReference>
<dbReference type="RefSeq" id="NP_446204.2">
    <property type="nucleotide sequence ID" value="NM_053752.2"/>
</dbReference>
<dbReference type="SMR" id="P13086"/>
<dbReference type="BioGRID" id="250390">
    <property type="interactions" value="6"/>
</dbReference>
<dbReference type="CORUM" id="P13086"/>
<dbReference type="FunCoup" id="P13086">
    <property type="interactions" value="2663"/>
</dbReference>
<dbReference type="IntAct" id="P13086">
    <property type="interactions" value="8"/>
</dbReference>
<dbReference type="MINT" id="P13086"/>
<dbReference type="STRING" id="10116.ENSRNOP00000007624"/>
<dbReference type="iPTMnet" id="P13086"/>
<dbReference type="PhosphoSitePlus" id="P13086"/>
<dbReference type="SwissPalm" id="P13086"/>
<dbReference type="jPOST" id="P13086"/>
<dbReference type="PaxDb" id="10116-ENSRNOP00000007624"/>
<dbReference type="GeneID" id="114597"/>
<dbReference type="KEGG" id="rno:114597"/>
<dbReference type="UCSC" id="RGD:619821">
    <property type="organism name" value="rat"/>
</dbReference>
<dbReference type="AGR" id="RGD:619821"/>
<dbReference type="CTD" id="8802"/>
<dbReference type="RGD" id="619821">
    <property type="gene designation" value="Suclg1"/>
</dbReference>
<dbReference type="eggNOG" id="KOG1255">
    <property type="taxonomic scope" value="Eukaryota"/>
</dbReference>
<dbReference type="HOGENOM" id="CLU_052104_1_0_1"/>
<dbReference type="InParanoid" id="P13086"/>
<dbReference type="OrthoDB" id="79447at9989"/>
<dbReference type="PhylomeDB" id="P13086"/>
<dbReference type="TreeFam" id="TF300666"/>
<dbReference type="Reactome" id="R-RNO-71403">
    <property type="pathway name" value="Citric acid cycle (TCA cycle)"/>
</dbReference>
<dbReference type="UniPathway" id="UPA00223">
    <property type="reaction ID" value="UER00999"/>
</dbReference>
<dbReference type="PRO" id="PR:P13086"/>
<dbReference type="Proteomes" id="UP000002494">
    <property type="component" value="Unplaced"/>
</dbReference>
<dbReference type="GO" id="GO:0005739">
    <property type="term" value="C:mitochondrion"/>
    <property type="evidence" value="ECO:0000318"/>
    <property type="project" value="GO_Central"/>
</dbReference>
<dbReference type="GO" id="GO:0032991">
    <property type="term" value="C:protein-containing complex"/>
    <property type="evidence" value="ECO:0000314"/>
    <property type="project" value="RGD"/>
</dbReference>
<dbReference type="GO" id="GO:0009361">
    <property type="term" value="C:succinate-CoA ligase complex (ADP-forming)"/>
    <property type="evidence" value="ECO:0000318"/>
    <property type="project" value="GO_Central"/>
</dbReference>
<dbReference type="GO" id="GO:0045244">
    <property type="term" value="C:succinate-CoA ligase complex (GDP-forming)"/>
    <property type="evidence" value="ECO:0000314"/>
    <property type="project" value="RGD"/>
</dbReference>
<dbReference type="GO" id="GO:0019003">
    <property type="term" value="F:GDP binding"/>
    <property type="evidence" value="ECO:0000314"/>
    <property type="project" value="RGD"/>
</dbReference>
<dbReference type="GO" id="GO:0044877">
    <property type="term" value="F:protein-containing complex binding"/>
    <property type="evidence" value="ECO:0000314"/>
    <property type="project" value="RGD"/>
</dbReference>
<dbReference type="GO" id="GO:0004775">
    <property type="term" value="F:succinate-CoA ligase (ADP-forming) activity"/>
    <property type="evidence" value="ECO:0000314"/>
    <property type="project" value="RGD"/>
</dbReference>
<dbReference type="GO" id="GO:0004776">
    <property type="term" value="F:succinate-CoA ligase (GDP-forming) activity"/>
    <property type="evidence" value="ECO:0000314"/>
    <property type="project" value="RGD"/>
</dbReference>
<dbReference type="GO" id="GO:0006105">
    <property type="term" value="P:succinate metabolic process"/>
    <property type="evidence" value="ECO:0000314"/>
    <property type="project" value="RGD"/>
</dbReference>
<dbReference type="GO" id="GO:0006104">
    <property type="term" value="P:succinyl-CoA metabolic process"/>
    <property type="evidence" value="ECO:0000314"/>
    <property type="project" value="RGD"/>
</dbReference>
<dbReference type="GO" id="GO:0006099">
    <property type="term" value="P:tricarboxylic acid cycle"/>
    <property type="evidence" value="ECO:0000314"/>
    <property type="project" value="RGD"/>
</dbReference>
<dbReference type="FunFam" id="3.40.50.720:FF:000002">
    <property type="entry name" value="Succinate--CoA ligase [ADP-forming] subunit alpha"/>
    <property type="match status" value="1"/>
</dbReference>
<dbReference type="FunFam" id="3.40.50.261:FF:000005">
    <property type="entry name" value="Succinate--CoA ligase [ADP-forming] subunit alpha, mitochondrial"/>
    <property type="match status" value="1"/>
</dbReference>
<dbReference type="Gene3D" id="3.40.50.720">
    <property type="entry name" value="NAD(P)-binding Rossmann-like Domain"/>
    <property type="match status" value="1"/>
</dbReference>
<dbReference type="Gene3D" id="3.40.50.261">
    <property type="entry name" value="Succinyl-CoA synthetase domains"/>
    <property type="match status" value="1"/>
</dbReference>
<dbReference type="HAMAP" id="MF_01988">
    <property type="entry name" value="Succ_CoA_alpha"/>
    <property type="match status" value="1"/>
</dbReference>
<dbReference type="InterPro" id="IPR017440">
    <property type="entry name" value="Cit_synth/succinyl-CoA_lig_AS"/>
</dbReference>
<dbReference type="InterPro" id="IPR033847">
    <property type="entry name" value="Citrt_syn/SCS-alpha_CS"/>
</dbReference>
<dbReference type="InterPro" id="IPR003781">
    <property type="entry name" value="CoA-bd"/>
</dbReference>
<dbReference type="InterPro" id="IPR005810">
    <property type="entry name" value="CoA_lig_alpha"/>
</dbReference>
<dbReference type="InterPro" id="IPR036291">
    <property type="entry name" value="NAD(P)-bd_dom_sf"/>
</dbReference>
<dbReference type="InterPro" id="IPR005811">
    <property type="entry name" value="SUCC_ACL_C"/>
</dbReference>
<dbReference type="InterPro" id="IPR016102">
    <property type="entry name" value="Succinyl-CoA_synth-like"/>
</dbReference>
<dbReference type="NCBIfam" id="NF004230">
    <property type="entry name" value="PRK05678.1"/>
    <property type="match status" value="1"/>
</dbReference>
<dbReference type="NCBIfam" id="TIGR01019">
    <property type="entry name" value="sucCoAalpha"/>
    <property type="match status" value="1"/>
</dbReference>
<dbReference type="PANTHER" id="PTHR11117:SF2">
    <property type="entry name" value="SUCCINATE--COA LIGASE [ADP_GDP-FORMING] SUBUNIT ALPHA, MITOCHONDRIAL"/>
    <property type="match status" value="1"/>
</dbReference>
<dbReference type="PANTHER" id="PTHR11117">
    <property type="entry name" value="SUCCINYL-COA LIGASE SUBUNIT ALPHA"/>
    <property type="match status" value="1"/>
</dbReference>
<dbReference type="Pfam" id="PF02629">
    <property type="entry name" value="CoA_binding"/>
    <property type="match status" value="1"/>
</dbReference>
<dbReference type="Pfam" id="PF00549">
    <property type="entry name" value="Ligase_CoA"/>
    <property type="match status" value="1"/>
</dbReference>
<dbReference type="PIRSF" id="PIRSF001553">
    <property type="entry name" value="SucCS_alpha"/>
    <property type="match status" value="1"/>
</dbReference>
<dbReference type="PRINTS" id="PR01798">
    <property type="entry name" value="SCOASYNTHASE"/>
</dbReference>
<dbReference type="SMART" id="SM00881">
    <property type="entry name" value="CoA_binding"/>
    <property type="match status" value="1"/>
</dbReference>
<dbReference type="SUPFAM" id="SSF51735">
    <property type="entry name" value="NAD(P)-binding Rossmann-fold domains"/>
    <property type="match status" value="1"/>
</dbReference>
<dbReference type="SUPFAM" id="SSF52210">
    <property type="entry name" value="Succinyl-CoA synthetase domains"/>
    <property type="match status" value="1"/>
</dbReference>
<dbReference type="PROSITE" id="PS01216">
    <property type="entry name" value="SUCCINYL_COA_LIG_1"/>
    <property type="match status" value="1"/>
</dbReference>
<dbReference type="PROSITE" id="PS00399">
    <property type="entry name" value="SUCCINYL_COA_LIG_2"/>
    <property type="match status" value="1"/>
</dbReference>
<feature type="transit peptide" description="Mitochondrion" evidence="3">
    <location>
        <begin position="1"/>
        <end position="34"/>
    </location>
</feature>
<feature type="chain" id="PRO_0000033343" description="Succinate--CoA ligase [ADP/GDP-forming] subunit alpha, mitochondrial" evidence="3">
    <location>
        <begin position="35"/>
        <end position="346"/>
    </location>
</feature>
<feature type="active site" description="Tele-phosphohistidine intermediate" evidence="3 4">
    <location>
        <position position="299"/>
    </location>
</feature>
<feature type="binding site" evidence="3">
    <location>
        <begin position="64"/>
        <end position="67"/>
    </location>
    <ligand>
        <name>CoA</name>
        <dbReference type="ChEBI" id="CHEBI:57287"/>
    </ligand>
</feature>
<feature type="binding site" evidence="3">
    <location>
        <position position="90"/>
    </location>
    <ligand>
        <name>CoA</name>
        <dbReference type="ChEBI" id="CHEBI:57287"/>
    </ligand>
</feature>
<feature type="binding site" evidence="3">
    <location>
        <begin position="143"/>
        <end position="145"/>
    </location>
    <ligand>
        <name>CoA</name>
        <dbReference type="ChEBI" id="CHEBI:57287"/>
    </ligand>
</feature>
<feature type="binding site" evidence="3">
    <location>
        <position position="207"/>
    </location>
    <ligand>
        <name>substrate</name>
        <note>ligand shared with subunit beta</note>
    </ligand>
</feature>
<feature type="modified residue" description="N6-acetyllysine" evidence="1">
    <location>
        <position position="54"/>
    </location>
</feature>
<feature type="modified residue" description="N6-acetyllysine; alternate" evidence="2">
    <location>
        <position position="57"/>
    </location>
</feature>
<feature type="modified residue" description="N6-succinyllysine; alternate" evidence="2">
    <location>
        <position position="57"/>
    </location>
</feature>
<feature type="modified residue" description="N6-acetyllysine; alternate" evidence="2">
    <location>
        <position position="66"/>
    </location>
</feature>
<feature type="modified residue" description="N6-succinyllysine; alternate" evidence="2">
    <location>
        <position position="66"/>
    </location>
</feature>
<feature type="modified residue" description="N6-acetyllysine" evidence="2">
    <location>
        <position position="81"/>
    </location>
</feature>
<feature type="modified residue" description="N6-acetyllysine" evidence="2">
    <location>
        <position position="94"/>
    </location>
</feature>
<feature type="modified residue" description="N6-acetyllysine" evidence="2">
    <location>
        <position position="105"/>
    </location>
</feature>
<feature type="modified residue" description="N6-succinyllysine" evidence="2">
    <location>
        <position position="338"/>
    </location>
</feature>
<feature type="sequence conflict" description="In Ref. 2; AAA41233." evidence="5" ref="2">
    <original>V</original>
    <variation>L</variation>
    <location>
        <position position="153"/>
    </location>
</feature>
<sequence length="346" mass="36148">MTAAVVAAAATATMVSGSSGLAAARLLSRTFLLQQNGIRHGSYTASRKNIYIDKNTKVICQGFTGKQGTFHSQQALEYGTKLVGGTTPGKGGKKHLGLPVFNTVKEAKEKTGATASVIYVPPPFAAAAINEAIDAEIPLVVCITEGIPQQDMVRVKHKLTRQGKTRLIGPNCPGIINPGECKIGIMPGHIHKKGRIGIVSRSGTLTYEAVHQTTQVGLGQSLCIGIGGDPFNGTNFIDCLDVFLKDPATEGIVLIGEIGGHAEENAAEFLKEHNSGPKAKPVVSFIAGITAPPGRRMGHAGAIIAGGKGGAKEKISALQSAGVIVSMSPAQLGTCMYKEFEKRKML</sequence>
<accession>P13086</accession>
<accession>Q6P7S4</accession>
<proteinExistence type="evidence at transcript level"/>
<reference key="1">
    <citation type="journal article" date="2004" name="Genome Res.">
        <title>The status, quality, and expansion of the NIH full-length cDNA project: the Mammalian Gene Collection (MGC).</title>
        <authorList>
            <consortium name="The MGC Project Team"/>
        </authorList>
    </citation>
    <scope>NUCLEOTIDE SEQUENCE [LARGE SCALE MRNA]</scope>
    <source>
        <tissue>Pituitary</tissue>
    </source>
</reference>
<reference key="2">
    <citation type="journal article" date="1988" name="Proc. Natl. Acad. Sci. U.S.A.">
        <title>Cloning and sequencing of the cytoplasmic precursor to the alpha subunit of rat liver mitochondrial succinyl-CoA synthetase.</title>
        <authorList>
            <person name="Henning W.D."/>
            <person name="Upton C."/>
            <person name="McFadden G."/>
            <person name="Majumdar R."/>
            <person name="Bridger W.A."/>
        </authorList>
    </citation>
    <scope>NUCLEOTIDE SEQUENCE [MRNA] OF 8-346</scope>
    <source>
        <tissue>Liver</tissue>
    </source>
</reference>
<comment type="function">
    <text evidence="3">Succinyl-CoA synthetase functions in the citric acid cycle (TCA), coupling the hydrolysis of succinyl-CoA to the synthesis of either ATP or GTP and thus represents the only step of substrate-level phosphorylation in the TCA. The alpha subunit of the enzyme binds the substrates coenzyme A and phosphate, while succinate binding and specificity for either ATP or GTP is provided by different beta subunits.</text>
</comment>
<comment type="catalytic activity">
    <reaction evidence="3">
        <text>succinate + ATP + CoA = succinyl-CoA + ADP + phosphate</text>
        <dbReference type="Rhea" id="RHEA:17661"/>
        <dbReference type="ChEBI" id="CHEBI:30031"/>
        <dbReference type="ChEBI" id="CHEBI:30616"/>
        <dbReference type="ChEBI" id="CHEBI:43474"/>
        <dbReference type="ChEBI" id="CHEBI:57287"/>
        <dbReference type="ChEBI" id="CHEBI:57292"/>
        <dbReference type="ChEBI" id="CHEBI:456216"/>
        <dbReference type="EC" id="6.2.1.5"/>
    </reaction>
</comment>
<comment type="catalytic activity">
    <reaction evidence="3">
        <text>GTP + succinate + CoA = succinyl-CoA + GDP + phosphate</text>
        <dbReference type="Rhea" id="RHEA:22120"/>
        <dbReference type="ChEBI" id="CHEBI:30031"/>
        <dbReference type="ChEBI" id="CHEBI:37565"/>
        <dbReference type="ChEBI" id="CHEBI:43474"/>
        <dbReference type="ChEBI" id="CHEBI:57287"/>
        <dbReference type="ChEBI" id="CHEBI:57292"/>
        <dbReference type="ChEBI" id="CHEBI:58189"/>
        <dbReference type="EC" id="6.2.1.4"/>
    </reaction>
</comment>
<comment type="pathway">
    <text evidence="3">Carbohydrate metabolism; tricarboxylic acid cycle; succinate from succinyl-CoA (ligase route): step 1/1.</text>
</comment>
<comment type="subunit">
    <text evidence="3">Heterodimer of an alpha and a beta subunit. Different beta subunits determine nucleotide specificity. Together with the ATP-specific beta subunit SUCLA2, forms an ADP-forming succinyl-CoA synthetase (A-SCS). Together with the GTP-specific beta subunit SUCLG2 forms a GDP-forming succinyl-CoA synthetase (G-SCS).</text>
</comment>
<comment type="subcellular location">
    <subcellularLocation>
        <location evidence="3">Mitochondrion</location>
    </subcellularLocation>
</comment>
<comment type="similarity">
    <text evidence="3">Belongs to the succinate/malate CoA ligase alpha subunit family.</text>
</comment>
<comment type="sequence caution" evidence="5">
    <conflict type="miscellaneous discrepancy">
        <sequence resource="EMBL-CDS" id="AAA41233"/>
    </conflict>
    <text>Chimeric cDNA.</text>
</comment>
<protein>
    <recommendedName>
        <fullName evidence="3">Succinate--CoA ligase [ADP/GDP-forming] subunit alpha, mitochondrial</fullName>
        <ecNumber evidence="3">6.2.1.4</ecNumber>
        <ecNumber evidence="3">6.2.1.5</ecNumber>
    </recommendedName>
    <alternativeName>
        <fullName evidence="3">Succinyl-CoA synthetase subunit alpha</fullName>
        <shortName evidence="3">SCS-alpha</shortName>
    </alternativeName>
</protein>
<keyword id="KW-0007">Acetylation</keyword>
<keyword id="KW-0436">Ligase</keyword>
<keyword id="KW-0496">Mitochondrion</keyword>
<keyword id="KW-0547">Nucleotide-binding</keyword>
<keyword id="KW-1185">Reference proteome</keyword>
<keyword id="KW-0809">Transit peptide</keyword>
<keyword id="KW-0816">Tricarboxylic acid cycle</keyword>